<dbReference type="EMBL" id="CR380949">
    <property type="protein sequence ID" value="CAG58198.1"/>
    <property type="molecule type" value="Genomic_DNA"/>
</dbReference>
<dbReference type="RefSeq" id="XP_445292.1">
    <property type="nucleotide sequence ID" value="XM_445292.1"/>
</dbReference>
<dbReference type="SMR" id="Q6FWV2"/>
<dbReference type="FunCoup" id="Q6FWV2">
    <property type="interactions" value="180"/>
</dbReference>
<dbReference type="STRING" id="284593.Q6FWV2"/>
<dbReference type="EnsemblFungi" id="CAGL0C02651g-T">
    <property type="protein sequence ID" value="CAGL0C02651g-T-p1"/>
    <property type="gene ID" value="CAGL0C02651g"/>
</dbReference>
<dbReference type="KEGG" id="cgr:2886914"/>
<dbReference type="CGD" id="CAL0127364">
    <property type="gene designation" value="CAGL0C02651g"/>
</dbReference>
<dbReference type="VEuPathDB" id="FungiDB:B1J91_C02651g"/>
<dbReference type="VEuPathDB" id="FungiDB:CAGL0C02651g"/>
<dbReference type="eggNOG" id="KOG4614">
    <property type="taxonomic scope" value="Eukaryota"/>
</dbReference>
<dbReference type="HOGENOM" id="CLU_047290_2_0_1"/>
<dbReference type="InParanoid" id="Q6FWV2"/>
<dbReference type="OMA" id="YFPNFHG"/>
<dbReference type="Proteomes" id="UP000002428">
    <property type="component" value="Chromosome C"/>
</dbReference>
<dbReference type="GO" id="GO:0005743">
    <property type="term" value="C:mitochondrial inner membrane"/>
    <property type="evidence" value="ECO:0007669"/>
    <property type="project" value="UniProtKB-SubCell"/>
</dbReference>
<dbReference type="GO" id="GO:0051082">
    <property type="term" value="F:unfolded protein binding"/>
    <property type="evidence" value="ECO:0007669"/>
    <property type="project" value="EnsemblFungi"/>
</dbReference>
<dbReference type="GO" id="GO:0033615">
    <property type="term" value="P:mitochondrial proton-transporting ATP synthase complex assembly"/>
    <property type="evidence" value="ECO:0007669"/>
    <property type="project" value="EnsemblFungi"/>
</dbReference>
<dbReference type="InterPro" id="IPR007849">
    <property type="entry name" value="ATP10"/>
</dbReference>
<dbReference type="PANTHER" id="PTHR28106">
    <property type="entry name" value="MITOCHONDRIAL ATPASE COMPLEX SUBUNIT ATP10"/>
    <property type="match status" value="1"/>
</dbReference>
<dbReference type="PANTHER" id="PTHR28106:SF1">
    <property type="entry name" value="MITOCHONDRIAL ATPASE COMPLEX SUBUNIT ATP10"/>
    <property type="match status" value="1"/>
</dbReference>
<dbReference type="Pfam" id="PF05176">
    <property type="entry name" value="ATP-synt_10"/>
    <property type="match status" value="1"/>
</dbReference>
<proteinExistence type="inferred from homology"/>
<name>ATP10_CANGA</name>
<feature type="chain" id="PRO_0000071725" description="Mitochondrial ATPase complex subunit ATP10">
    <location>
        <begin position="1"/>
        <end position="273"/>
    </location>
</feature>
<sequence>MRVVFQQCTKFSTSCNRAFLARFLKPVMNASPKEHVVKQLLKPVGLNVPPRPNIKYSEGNSWLDLFDGAKTEERIKELEIEFAKSGMYEMATFRKTNGKLFLSPESYWKADKALYFPHLSGRTLSSEDHGNVEDVLRGKTSVIRVFSTQVGDKISREYIKNTELGIDNYENQSCQVIDINFLENKLKSWLFKLSLNNLKSTVPVQRHDNYWLCHREQIPFLMRERLLINNVYSGYIFVVDPNLKIRFMACGPASADEFNKLWKVVGQLSKEKK</sequence>
<organism>
    <name type="scientific">Candida glabrata (strain ATCC 2001 / BCRC 20586 / JCM 3761 / NBRC 0622 / NRRL Y-65 / CBS 138)</name>
    <name type="common">Yeast</name>
    <name type="synonym">Nakaseomyces glabratus</name>
    <dbReference type="NCBI Taxonomy" id="284593"/>
    <lineage>
        <taxon>Eukaryota</taxon>
        <taxon>Fungi</taxon>
        <taxon>Dikarya</taxon>
        <taxon>Ascomycota</taxon>
        <taxon>Saccharomycotina</taxon>
        <taxon>Saccharomycetes</taxon>
        <taxon>Saccharomycetales</taxon>
        <taxon>Saccharomycetaceae</taxon>
        <taxon>Nakaseomyces</taxon>
    </lineage>
</organism>
<comment type="function">
    <text evidence="1">Involved in assembly of the mitochondrial F1-F0 complex.</text>
</comment>
<comment type="subcellular location">
    <subcellularLocation>
        <location evidence="1">Mitochondrion inner membrane</location>
    </subcellularLocation>
</comment>
<comment type="similarity">
    <text evidence="2">Belongs to the ATP10 family.</text>
</comment>
<accession>Q6FWV2</accession>
<reference key="1">
    <citation type="journal article" date="2004" name="Nature">
        <title>Genome evolution in yeasts.</title>
        <authorList>
            <person name="Dujon B."/>
            <person name="Sherman D."/>
            <person name="Fischer G."/>
            <person name="Durrens P."/>
            <person name="Casaregola S."/>
            <person name="Lafontaine I."/>
            <person name="de Montigny J."/>
            <person name="Marck C."/>
            <person name="Neuveglise C."/>
            <person name="Talla E."/>
            <person name="Goffard N."/>
            <person name="Frangeul L."/>
            <person name="Aigle M."/>
            <person name="Anthouard V."/>
            <person name="Babour A."/>
            <person name="Barbe V."/>
            <person name="Barnay S."/>
            <person name="Blanchin S."/>
            <person name="Beckerich J.-M."/>
            <person name="Beyne E."/>
            <person name="Bleykasten C."/>
            <person name="Boisrame A."/>
            <person name="Boyer J."/>
            <person name="Cattolico L."/>
            <person name="Confanioleri F."/>
            <person name="de Daruvar A."/>
            <person name="Despons L."/>
            <person name="Fabre E."/>
            <person name="Fairhead C."/>
            <person name="Ferry-Dumazet H."/>
            <person name="Groppi A."/>
            <person name="Hantraye F."/>
            <person name="Hennequin C."/>
            <person name="Jauniaux N."/>
            <person name="Joyet P."/>
            <person name="Kachouri R."/>
            <person name="Kerrest A."/>
            <person name="Koszul R."/>
            <person name="Lemaire M."/>
            <person name="Lesur I."/>
            <person name="Ma L."/>
            <person name="Muller H."/>
            <person name="Nicaud J.-M."/>
            <person name="Nikolski M."/>
            <person name="Oztas S."/>
            <person name="Ozier-Kalogeropoulos O."/>
            <person name="Pellenz S."/>
            <person name="Potier S."/>
            <person name="Richard G.-F."/>
            <person name="Straub M.-L."/>
            <person name="Suleau A."/>
            <person name="Swennen D."/>
            <person name="Tekaia F."/>
            <person name="Wesolowski-Louvel M."/>
            <person name="Westhof E."/>
            <person name="Wirth B."/>
            <person name="Zeniou-Meyer M."/>
            <person name="Zivanovic Y."/>
            <person name="Bolotin-Fukuhara M."/>
            <person name="Thierry A."/>
            <person name="Bouchier C."/>
            <person name="Caudron B."/>
            <person name="Scarpelli C."/>
            <person name="Gaillardin C."/>
            <person name="Weissenbach J."/>
            <person name="Wincker P."/>
            <person name="Souciet J.-L."/>
        </authorList>
    </citation>
    <scope>NUCLEOTIDE SEQUENCE [LARGE SCALE GENOMIC DNA]</scope>
    <source>
        <strain>ATCC 2001 / BCRC 20586 / JCM 3761 / NBRC 0622 / NRRL Y-65 / CBS 138</strain>
    </source>
</reference>
<gene>
    <name type="primary">ATP10</name>
    <name type="ordered locus">CAGL0C02651g</name>
</gene>
<evidence type="ECO:0000250" key="1"/>
<evidence type="ECO:0000305" key="2"/>
<keyword id="KW-0472">Membrane</keyword>
<keyword id="KW-0496">Mitochondrion</keyword>
<keyword id="KW-0999">Mitochondrion inner membrane</keyword>
<keyword id="KW-1185">Reference proteome</keyword>
<protein>
    <recommendedName>
        <fullName>Mitochondrial ATPase complex subunit ATP10</fullName>
    </recommendedName>
</protein>